<feature type="chain" id="PRO_1000081146" description="Ion-translocating oxidoreductase complex subunit D">
    <location>
        <begin position="1"/>
        <end position="352"/>
    </location>
</feature>
<feature type="transmembrane region" description="Helical" evidence="1">
    <location>
        <begin position="20"/>
        <end position="40"/>
    </location>
</feature>
<feature type="transmembrane region" description="Helical" evidence="1">
    <location>
        <begin position="42"/>
        <end position="62"/>
    </location>
</feature>
<feature type="transmembrane region" description="Helical" evidence="1">
    <location>
        <begin position="89"/>
        <end position="109"/>
    </location>
</feature>
<feature type="transmembrane region" description="Helical" evidence="1">
    <location>
        <begin position="123"/>
        <end position="143"/>
    </location>
</feature>
<feature type="transmembrane region" description="Helical" evidence="1">
    <location>
        <begin position="214"/>
        <end position="234"/>
    </location>
</feature>
<feature type="transmembrane region" description="Helical" evidence="1">
    <location>
        <begin position="242"/>
        <end position="262"/>
    </location>
</feature>
<feature type="transmembrane region" description="Helical" evidence="1">
    <location>
        <begin position="267"/>
        <end position="287"/>
    </location>
</feature>
<feature type="transmembrane region" description="Helical" evidence="1">
    <location>
        <begin position="301"/>
        <end position="321"/>
    </location>
</feature>
<feature type="transmembrane region" description="Helical" evidence="1">
    <location>
        <begin position="322"/>
        <end position="342"/>
    </location>
</feature>
<feature type="modified residue" description="FMN phosphoryl threonine" evidence="1">
    <location>
        <position position="187"/>
    </location>
</feature>
<gene>
    <name evidence="1" type="primary">rsxD</name>
    <name type="ordered locus">EcolC_1999</name>
</gene>
<name>RSXD_ECOLC</name>
<sequence length="352" mass="38096">MVFRIASSPYTHNQRQTSRIMLLVLLAAVPGIAAQLWFFGWGTLVQILLASVSALLAEALVLKLRKQSVAATLKDNSALLTGLLLAVSIPPLAPWWMVVLGTVFAAIIAKQLYGGLGQNPFNPAMIGYVVLLISFPVQMTSWLPPHEIAVNIPGFIDAIQVIFSGHTASGGDMNTLRLGIDGISQATPLDTFKTSVRAGHSVEQIMQYPIYSGILAGAGWQWVNLAWLAGGLWLLWQKAIRWHIPLSFLVTLALCATLGWLFSPETLAAPQIHLLSGATMLGAFFILTDPVTASTTNRGRLIFGALAGLLVWLIRSFGGYPDGVAFAVLLANITVPLIDYYTRPRVYGHRKG</sequence>
<organism>
    <name type="scientific">Escherichia coli (strain ATCC 8739 / DSM 1576 / NBRC 3972 / NCIMB 8545 / WDCM 00012 / Crooks)</name>
    <dbReference type="NCBI Taxonomy" id="481805"/>
    <lineage>
        <taxon>Bacteria</taxon>
        <taxon>Pseudomonadati</taxon>
        <taxon>Pseudomonadota</taxon>
        <taxon>Gammaproteobacteria</taxon>
        <taxon>Enterobacterales</taxon>
        <taxon>Enterobacteriaceae</taxon>
        <taxon>Escherichia</taxon>
    </lineage>
</organism>
<comment type="function">
    <text evidence="1">Part of a membrane-bound complex that couples electron transfer with translocation of ions across the membrane. Required to maintain the reduced state of SoxR.</text>
</comment>
<comment type="cofactor">
    <cofactor evidence="1">
        <name>FMN</name>
        <dbReference type="ChEBI" id="CHEBI:58210"/>
    </cofactor>
</comment>
<comment type="subunit">
    <text evidence="1">The complex is composed of six subunits: RsxA, RsxB, RsxC, RsxD, RsxE and RsxG.</text>
</comment>
<comment type="subcellular location">
    <subcellularLocation>
        <location evidence="1">Cell inner membrane</location>
        <topology evidence="1">Multi-pass membrane protein</topology>
    </subcellularLocation>
</comment>
<comment type="similarity">
    <text evidence="1">Belongs to the NqrB/RnfD family.</text>
</comment>
<evidence type="ECO:0000255" key="1">
    <source>
        <dbReference type="HAMAP-Rule" id="MF_00462"/>
    </source>
</evidence>
<reference key="1">
    <citation type="submission" date="2008-02" db="EMBL/GenBank/DDBJ databases">
        <title>Complete sequence of Escherichia coli C str. ATCC 8739.</title>
        <authorList>
            <person name="Copeland A."/>
            <person name="Lucas S."/>
            <person name="Lapidus A."/>
            <person name="Glavina del Rio T."/>
            <person name="Dalin E."/>
            <person name="Tice H."/>
            <person name="Bruce D."/>
            <person name="Goodwin L."/>
            <person name="Pitluck S."/>
            <person name="Kiss H."/>
            <person name="Brettin T."/>
            <person name="Detter J.C."/>
            <person name="Han C."/>
            <person name="Kuske C.R."/>
            <person name="Schmutz J."/>
            <person name="Larimer F."/>
            <person name="Land M."/>
            <person name="Hauser L."/>
            <person name="Kyrpides N."/>
            <person name="Mikhailova N."/>
            <person name="Ingram L."/>
            <person name="Richardson P."/>
        </authorList>
    </citation>
    <scope>NUCLEOTIDE SEQUENCE [LARGE SCALE GENOMIC DNA]</scope>
    <source>
        <strain>ATCC 8739 / DSM 1576 / NBRC 3972 / NCIMB 8545 / WDCM 00012 / Crooks</strain>
    </source>
</reference>
<accession>B1IQC4</accession>
<dbReference type="EC" id="7.-.-.-" evidence="1"/>
<dbReference type="EMBL" id="CP000946">
    <property type="protein sequence ID" value="ACA77645.1"/>
    <property type="molecule type" value="Genomic_DNA"/>
</dbReference>
<dbReference type="RefSeq" id="WP_000231912.1">
    <property type="nucleotide sequence ID" value="NC_010468.1"/>
</dbReference>
<dbReference type="SMR" id="B1IQC4"/>
<dbReference type="KEGG" id="ecl:EcolC_1999"/>
<dbReference type="HOGENOM" id="CLU_042020_0_0_6"/>
<dbReference type="GO" id="GO:0005886">
    <property type="term" value="C:plasma membrane"/>
    <property type="evidence" value="ECO:0007669"/>
    <property type="project" value="UniProtKB-SubCell"/>
</dbReference>
<dbReference type="GO" id="GO:0022900">
    <property type="term" value="P:electron transport chain"/>
    <property type="evidence" value="ECO:0007669"/>
    <property type="project" value="UniProtKB-UniRule"/>
</dbReference>
<dbReference type="GO" id="GO:0055085">
    <property type="term" value="P:transmembrane transport"/>
    <property type="evidence" value="ECO:0007669"/>
    <property type="project" value="InterPro"/>
</dbReference>
<dbReference type="HAMAP" id="MF_00462">
    <property type="entry name" value="RsxD_RnfD"/>
    <property type="match status" value="1"/>
</dbReference>
<dbReference type="InterPro" id="IPR004338">
    <property type="entry name" value="NqrB/RnfD"/>
</dbReference>
<dbReference type="InterPro" id="IPR011303">
    <property type="entry name" value="RnfD_bac"/>
</dbReference>
<dbReference type="NCBIfam" id="NF002011">
    <property type="entry name" value="PRK00816.1"/>
    <property type="match status" value="1"/>
</dbReference>
<dbReference type="NCBIfam" id="TIGR01946">
    <property type="entry name" value="rnfD"/>
    <property type="match status" value="1"/>
</dbReference>
<dbReference type="PANTHER" id="PTHR30578">
    <property type="entry name" value="ELECTRON TRANSPORT COMPLEX PROTEIN RNFD"/>
    <property type="match status" value="1"/>
</dbReference>
<dbReference type="PANTHER" id="PTHR30578:SF0">
    <property type="entry name" value="ION-TRANSLOCATING OXIDOREDUCTASE COMPLEX SUBUNIT D"/>
    <property type="match status" value="1"/>
</dbReference>
<dbReference type="Pfam" id="PF03116">
    <property type="entry name" value="NQR2_RnfD_RnfE"/>
    <property type="match status" value="1"/>
</dbReference>
<protein>
    <recommendedName>
        <fullName evidence="1">Ion-translocating oxidoreductase complex subunit D</fullName>
        <ecNumber evidence="1">7.-.-.-</ecNumber>
    </recommendedName>
    <alternativeName>
        <fullName evidence="1">Rsx electron transport complex subunit D</fullName>
    </alternativeName>
</protein>
<keyword id="KW-0997">Cell inner membrane</keyword>
<keyword id="KW-1003">Cell membrane</keyword>
<keyword id="KW-0249">Electron transport</keyword>
<keyword id="KW-0285">Flavoprotein</keyword>
<keyword id="KW-0288">FMN</keyword>
<keyword id="KW-0472">Membrane</keyword>
<keyword id="KW-0597">Phosphoprotein</keyword>
<keyword id="KW-1278">Translocase</keyword>
<keyword id="KW-0812">Transmembrane</keyword>
<keyword id="KW-1133">Transmembrane helix</keyword>
<keyword id="KW-0813">Transport</keyword>
<proteinExistence type="inferred from homology"/>